<organism>
    <name type="scientific">Shewanella baltica (strain OS185)</name>
    <dbReference type="NCBI Taxonomy" id="402882"/>
    <lineage>
        <taxon>Bacteria</taxon>
        <taxon>Pseudomonadati</taxon>
        <taxon>Pseudomonadota</taxon>
        <taxon>Gammaproteobacteria</taxon>
        <taxon>Alteromonadales</taxon>
        <taxon>Shewanellaceae</taxon>
        <taxon>Shewanella</taxon>
    </lineage>
</organism>
<feature type="chain" id="PRO_1000011413" description="Ribonuclease T">
    <location>
        <begin position="1"/>
        <end position="223"/>
    </location>
</feature>
<feature type="domain" description="Exonuclease" evidence="1">
    <location>
        <begin position="20"/>
        <end position="194"/>
    </location>
</feature>
<feature type="active site" description="Proton donor/acceptor" evidence="1">
    <location>
        <position position="181"/>
    </location>
</feature>
<feature type="binding site" evidence="1">
    <location>
        <position position="23"/>
    </location>
    <ligand>
        <name>Mg(2+)</name>
        <dbReference type="ChEBI" id="CHEBI:18420"/>
        <label>1</label>
        <note>catalytic</note>
    </ligand>
</feature>
<feature type="binding site" evidence="1">
    <location>
        <position position="23"/>
    </location>
    <ligand>
        <name>Mg(2+)</name>
        <dbReference type="ChEBI" id="CHEBI:18420"/>
        <label>2</label>
        <note>catalytic</note>
    </ligand>
</feature>
<feature type="binding site" evidence="1">
    <location>
        <position position="25"/>
    </location>
    <ligand>
        <name>Mg(2+)</name>
        <dbReference type="ChEBI" id="CHEBI:18420"/>
        <label>2</label>
        <note>catalytic</note>
    </ligand>
</feature>
<feature type="binding site" evidence="1">
    <location>
        <position position="181"/>
    </location>
    <ligand>
        <name>Mg(2+)</name>
        <dbReference type="ChEBI" id="CHEBI:18420"/>
        <label>2</label>
        <note>catalytic</note>
    </ligand>
</feature>
<feature type="binding site" evidence="1">
    <location>
        <position position="186"/>
    </location>
    <ligand>
        <name>Mg(2+)</name>
        <dbReference type="ChEBI" id="CHEBI:18420"/>
        <label>2</label>
        <note>catalytic</note>
    </ligand>
</feature>
<feature type="site" description="Important for substrate binding and specificity" evidence="1">
    <location>
        <position position="29"/>
    </location>
</feature>
<feature type="site" description="Important for substrate binding and specificity" evidence="1">
    <location>
        <position position="77"/>
    </location>
</feature>
<feature type="site" description="Important for substrate binding and specificity" evidence="1">
    <location>
        <position position="124"/>
    </location>
</feature>
<feature type="site" description="Important for substrate binding and specificity" evidence="1">
    <location>
        <position position="146"/>
    </location>
</feature>
<proteinExistence type="inferred from homology"/>
<keyword id="KW-0269">Exonuclease</keyword>
<keyword id="KW-0378">Hydrolase</keyword>
<keyword id="KW-0460">Magnesium</keyword>
<keyword id="KW-0479">Metal-binding</keyword>
<keyword id="KW-0540">Nuclease</keyword>
<keyword id="KW-0819">tRNA processing</keyword>
<protein>
    <recommendedName>
        <fullName evidence="1">Ribonuclease T</fullName>
        <ecNumber evidence="1">3.1.13.-</ecNumber>
    </recommendedName>
    <alternativeName>
        <fullName evidence="1">Exoribonuclease T</fullName>
        <shortName evidence="1">RNase T</shortName>
    </alternativeName>
</protein>
<sequence length="223" mass="24462">MSDICDANKLKYRFRGYFPVVIDVETAGFNSQTDALLEIAVTLLKMDNEGVIGIDKTLHFHIEPFEGANLEPEALAFNGIDPTNPLRGAVSEKEAFLEIFKAVKKAQKASDCHRSIIVAHNAAFDHGFVSKAIERCDLKRSPFHPFATFDTATLAGLAIGHTVLAKACIMAGIPFDNKEAHSALYDTERTAELFCHIVNRWKSLGGWPLLAVDEQDAQSGTEA</sequence>
<dbReference type="EC" id="3.1.13.-" evidence="1"/>
<dbReference type="EMBL" id="CP000753">
    <property type="protein sequence ID" value="ABS07878.1"/>
    <property type="molecule type" value="Genomic_DNA"/>
</dbReference>
<dbReference type="RefSeq" id="WP_006081248.1">
    <property type="nucleotide sequence ID" value="NC_009665.1"/>
</dbReference>
<dbReference type="SMR" id="A6WM39"/>
<dbReference type="KEGG" id="sbm:Shew185_1735"/>
<dbReference type="HOGENOM" id="CLU_082724_0_0_6"/>
<dbReference type="GO" id="GO:0005829">
    <property type="term" value="C:cytosol"/>
    <property type="evidence" value="ECO:0007669"/>
    <property type="project" value="TreeGrafter"/>
</dbReference>
<dbReference type="GO" id="GO:0008408">
    <property type="term" value="F:3'-5' exonuclease activity"/>
    <property type="evidence" value="ECO:0007669"/>
    <property type="project" value="TreeGrafter"/>
</dbReference>
<dbReference type="GO" id="GO:0000287">
    <property type="term" value="F:magnesium ion binding"/>
    <property type="evidence" value="ECO:0007669"/>
    <property type="project" value="UniProtKB-UniRule"/>
</dbReference>
<dbReference type="GO" id="GO:0003676">
    <property type="term" value="F:nucleic acid binding"/>
    <property type="evidence" value="ECO:0007669"/>
    <property type="project" value="InterPro"/>
</dbReference>
<dbReference type="GO" id="GO:0016896">
    <property type="term" value="F:RNA exonuclease activity, producing 5'-phosphomonoesters"/>
    <property type="evidence" value="ECO:0007669"/>
    <property type="project" value="UniProtKB-UniRule"/>
</dbReference>
<dbReference type="GO" id="GO:0045004">
    <property type="term" value="P:DNA replication proofreading"/>
    <property type="evidence" value="ECO:0007669"/>
    <property type="project" value="TreeGrafter"/>
</dbReference>
<dbReference type="GO" id="GO:0008033">
    <property type="term" value="P:tRNA processing"/>
    <property type="evidence" value="ECO:0007669"/>
    <property type="project" value="UniProtKB-KW"/>
</dbReference>
<dbReference type="CDD" id="cd06134">
    <property type="entry name" value="RNaseT"/>
    <property type="match status" value="1"/>
</dbReference>
<dbReference type="FunFam" id="3.30.420.10:FF:000009">
    <property type="entry name" value="Ribonuclease T"/>
    <property type="match status" value="1"/>
</dbReference>
<dbReference type="Gene3D" id="3.30.420.10">
    <property type="entry name" value="Ribonuclease H-like superfamily/Ribonuclease H"/>
    <property type="match status" value="1"/>
</dbReference>
<dbReference type="HAMAP" id="MF_00157">
    <property type="entry name" value="RNase_T"/>
    <property type="match status" value="1"/>
</dbReference>
<dbReference type="InterPro" id="IPR013520">
    <property type="entry name" value="Exonuclease_RNaseT/DNA_pol3"/>
</dbReference>
<dbReference type="InterPro" id="IPR005987">
    <property type="entry name" value="RNase_T"/>
</dbReference>
<dbReference type="InterPro" id="IPR012337">
    <property type="entry name" value="RNaseH-like_sf"/>
</dbReference>
<dbReference type="InterPro" id="IPR036397">
    <property type="entry name" value="RNaseH_sf"/>
</dbReference>
<dbReference type="NCBIfam" id="TIGR01298">
    <property type="entry name" value="RNaseT"/>
    <property type="match status" value="1"/>
</dbReference>
<dbReference type="PANTHER" id="PTHR30231">
    <property type="entry name" value="DNA POLYMERASE III SUBUNIT EPSILON"/>
    <property type="match status" value="1"/>
</dbReference>
<dbReference type="PANTHER" id="PTHR30231:SF2">
    <property type="entry name" value="RIBONUCLEASE T"/>
    <property type="match status" value="1"/>
</dbReference>
<dbReference type="Pfam" id="PF00929">
    <property type="entry name" value="RNase_T"/>
    <property type="match status" value="1"/>
</dbReference>
<dbReference type="SMART" id="SM00479">
    <property type="entry name" value="EXOIII"/>
    <property type="match status" value="1"/>
</dbReference>
<dbReference type="SUPFAM" id="SSF53098">
    <property type="entry name" value="Ribonuclease H-like"/>
    <property type="match status" value="1"/>
</dbReference>
<comment type="function">
    <text evidence="1">Trims short 3' overhangs of a variety of RNA species, leaving a one or two nucleotide 3' overhang. Responsible for the end-turnover of tRNA: specifically removes the terminal AMP residue from uncharged tRNA (tRNA-C-C-A). Also appears to be involved in tRNA biosynthesis.</text>
</comment>
<comment type="cofactor">
    <cofactor evidence="1">
        <name>Mg(2+)</name>
        <dbReference type="ChEBI" id="CHEBI:18420"/>
    </cofactor>
    <text evidence="1">Binds two Mg(2+) per subunit. The active form of the enzyme binds two Mg(2+) ions in its active site. The first Mg(2+) forms only one salt bridge with the protein.</text>
</comment>
<comment type="subunit">
    <text evidence="1">Homodimer.</text>
</comment>
<comment type="similarity">
    <text evidence="1">Belongs to the RNase T family.</text>
</comment>
<name>RNT_SHEB8</name>
<gene>
    <name evidence="1" type="primary">rnt</name>
    <name type="ordered locus">Shew185_1735</name>
</gene>
<accession>A6WM39</accession>
<evidence type="ECO:0000255" key="1">
    <source>
        <dbReference type="HAMAP-Rule" id="MF_00157"/>
    </source>
</evidence>
<reference key="1">
    <citation type="submission" date="2007-07" db="EMBL/GenBank/DDBJ databases">
        <title>Complete sequence of chromosome of Shewanella baltica OS185.</title>
        <authorList>
            <consortium name="US DOE Joint Genome Institute"/>
            <person name="Copeland A."/>
            <person name="Lucas S."/>
            <person name="Lapidus A."/>
            <person name="Barry K."/>
            <person name="Glavina del Rio T."/>
            <person name="Dalin E."/>
            <person name="Tice H."/>
            <person name="Pitluck S."/>
            <person name="Sims D."/>
            <person name="Brettin T."/>
            <person name="Bruce D."/>
            <person name="Detter J.C."/>
            <person name="Han C."/>
            <person name="Schmutz J."/>
            <person name="Larimer F."/>
            <person name="Land M."/>
            <person name="Hauser L."/>
            <person name="Kyrpides N."/>
            <person name="Mikhailova N."/>
            <person name="Brettar I."/>
            <person name="Rodrigues J."/>
            <person name="Konstantinidis K."/>
            <person name="Tiedje J."/>
            <person name="Richardson P."/>
        </authorList>
    </citation>
    <scope>NUCLEOTIDE SEQUENCE [LARGE SCALE GENOMIC DNA]</scope>
    <source>
        <strain>OS185</strain>
    </source>
</reference>